<proteinExistence type="evidence at protein level"/>
<accession>P25973</accession>
<keyword id="KW-0903">Direct protein sequencing</keyword>
<keyword id="KW-0646">Protease inhibitor</keyword>
<keyword id="KW-1185">Reference proteome</keyword>
<keyword id="KW-0789">Thiol protease inhibitor</keyword>
<dbReference type="PIR" id="S10588">
    <property type="entry name" value="S10588"/>
</dbReference>
<dbReference type="SMR" id="P25973"/>
<dbReference type="STRING" id="3847.P25973"/>
<dbReference type="MEROPS" id="I25.014"/>
<dbReference type="PaxDb" id="3847-GLYMA14G04250.1"/>
<dbReference type="InParanoid" id="P25973"/>
<dbReference type="Proteomes" id="UP000008827">
    <property type="component" value="Unplaced"/>
</dbReference>
<dbReference type="GO" id="GO:0004869">
    <property type="term" value="F:cysteine-type endopeptidase inhibitor activity"/>
    <property type="evidence" value="ECO:0000318"/>
    <property type="project" value="GO_Central"/>
</dbReference>
<dbReference type="CDD" id="cd00042">
    <property type="entry name" value="CY"/>
    <property type="match status" value="1"/>
</dbReference>
<dbReference type="FunFam" id="3.10.450.10:FF:000076">
    <property type="entry name" value="Cystatin"/>
    <property type="match status" value="1"/>
</dbReference>
<dbReference type="Gene3D" id="3.10.450.10">
    <property type="match status" value="1"/>
</dbReference>
<dbReference type="InterPro" id="IPR027214">
    <property type="entry name" value="Cystatin"/>
</dbReference>
<dbReference type="InterPro" id="IPR000010">
    <property type="entry name" value="Cystatin_dom"/>
</dbReference>
<dbReference type="InterPro" id="IPR046350">
    <property type="entry name" value="Cystatin_sf"/>
</dbReference>
<dbReference type="PANTHER" id="PTHR11413">
    <property type="entry name" value="CYSTATIN FAMILY MEMBER"/>
    <property type="match status" value="1"/>
</dbReference>
<dbReference type="PANTHER" id="PTHR11413:SF125">
    <property type="entry name" value="CYSTEINE PROTEINASE INHIBITOR"/>
    <property type="match status" value="1"/>
</dbReference>
<dbReference type="Pfam" id="PF00031">
    <property type="entry name" value="Cystatin"/>
    <property type="match status" value="1"/>
</dbReference>
<dbReference type="SUPFAM" id="SSF54403">
    <property type="entry name" value="Cystatin/monellin"/>
    <property type="match status" value="1"/>
</dbReference>
<name>CYT_SOYBN</name>
<comment type="function">
    <text>Inhibits papain and cathepsin B (very poorly).</text>
</comment>
<comment type="similarity">
    <text evidence="1">Belongs to the cystatin family. Phytocystatin subfamily.</text>
</comment>
<protein>
    <recommendedName>
        <fullName>Cystatin</fullName>
    </recommendedName>
    <alternativeName>
        <fullName>Low molecular mass protein inhibitor of cysteine proteinases</fullName>
    </alternativeName>
</protein>
<reference key="1">
    <citation type="journal article" date="1990" name="Biol. Chem. Hoppe-Seyler">
        <title>Low molecular mass protein inhibitor of cysteine proteinases from soybean.</title>
        <authorList>
            <person name="Brzin J."/>
            <person name="Ritonja A."/>
            <person name="Popovic T."/>
            <person name="Turk V."/>
        </authorList>
    </citation>
    <scope>PROTEIN SEQUENCE</scope>
    <source>
        <tissue>Seed</tissue>
    </source>
</reference>
<evidence type="ECO:0000305" key="1"/>
<sequence>GFTDITGAQNSIDIENLARFAVDEHNKKENAVLEFVRVKSAKKQVVSG</sequence>
<organism>
    <name type="scientific">Glycine max</name>
    <name type="common">Soybean</name>
    <name type="synonym">Glycine hispida</name>
    <dbReference type="NCBI Taxonomy" id="3847"/>
    <lineage>
        <taxon>Eukaryota</taxon>
        <taxon>Viridiplantae</taxon>
        <taxon>Streptophyta</taxon>
        <taxon>Embryophyta</taxon>
        <taxon>Tracheophyta</taxon>
        <taxon>Spermatophyta</taxon>
        <taxon>Magnoliopsida</taxon>
        <taxon>eudicotyledons</taxon>
        <taxon>Gunneridae</taxon>
        <taxon>Pentapetalae</taxon>
        <taxon>rosids</taxon>
        <taxon>fabids</taxon>
        <taxon>Fabales</taxon>
        <taxon>Fabaceae</taxon>
        <taxon>Papilionoideae</taxon>
        <taxon>50 kb inversion clade</taxon>
        <taxon>NPAAA clade</taxon>
        <taxon>indigoferoid/millettioid clade</taxon>
        <taxon>Phaseoleae</taxon>
        <taxon>Glycine</taxon>
        <taxon>Glycine subgen. Soja</taxon>
    </lineage>
</organism>
<feature type="chain" id="PRO_0000207160" description="Cystatin">
    <location>
        <begin position="1" status="less than"/>
        <end position="48" status="greater than"/>
    </location>
</feature>
<feature type="short sequence motif" description="Secondary area of contact">
    <location>
        <begin position="44"/>
        <end position="48"/>
    </location>
</feature>
<feature type="non-terminal residue">
    <location>
        <position position="1"/>
    </location>
</feature>
<feature type="non-terminal residue">
    <location>
        <position position="48"/>
    </location>
</feature>